<keyword id="KW-0106">Calcium</keyword>
<keyword id="KW-0119">Carbohydrate metabolism</keyword>
<keyword id="KW-0963">Cytoplasm</keyword>
<keyword id="KW-0326">Glycosidase</keyword>
<keyword id="KW-0378">Hydrolase</keyword>
<keyword id="KW-0479">Metal-binding</keyword>
<keyword id="KW-1185">Reference proteome</keyword>
<keyword id="KW-0915">Sodium</keyword>
<proteinExistence type="evidence at protein level"/>
<accession>P26612</accession>
<accession>P78072</accession>
<sequence>MRNPTLLQCFHWYYPEGGKLWPELAERADGFNDIGINMVWLPPAYKGASGGYSVGYDSYDLFDLGEFDQKGSIPTKYGDKAQLLAAIDALKRNDIAVLLDVVVNHKMGADEKEAIRVQRVNADDRTQIDEEIIECEGWTRYTFPARAGQYSQFIWDFKCFSGIDHIENPDEDGIFKIVNDYTGEGWNDQVDDELGNFDYLMGENIDFRNHAVTEEIKYWARWVMEQTQCDGFRLDAVKHIPAWFYKEWIEHVQEVAPKPLFIVAEYWSHEVDKLQTYIDQVEGKTMLFDAPLQMKFHEASRMGRDYDMTQIFTGTLVEADPFHAVTLVANHDTQPLQALEAPVEPWFKPLAYALILLRENGVPSVFYPDLYGAHYEDVGGDGQTYPIDMPIIEQLDELILARQRFAHGVQTLFFDHPNCIAFSRSGTDEFPGCVVVMSNGDDGEKTIHLGENYGNKTWRDFLGNRQERVVTDENGEATFFCNGGSVSVWVIEEVI</sequence>
<name>AMY2_ECOLI</name>
<dbReference type="EC" id="3.2.1.1" evidence="4"/>
<dbReference type="EMBL" id="L01642">
    <property type="protein sequence ID" value="AAA23810.1"/>
    <property type="molecule type" value="Genomic_DNA"/>
</dbReference>
<dbReference type="EMBL" id="U00096">
    <property type="protein sequence ID" value="AAC74994.1"/>
    <property type="molecule type" value="Genomic_DNA"/>
</dbReference>
<dbReference type="EMBL" id="AP009048">
    <property type="protein sequence ID" value="BAA15755.1"/>
    <property type="molecule type" value="Genomic_DNA"/>
</dbReference>
<dbReference type="EMBL" id="M85240">
    <property type="status" value="NOT_ANNOTATED_CDS"/>
    <property type="molecule type" value="Genomic_DNA"/>
</dbReference>
<dbReference type="EMBL" id="L13279">
    <property type="protein sequence ID" value="AAA82575.1"/>
    <property type="molecule type" value="Genomic_DNA"/>
</dbReference>
<dbReference type="PIR" id="D64956">
    <property type="entry name" value="A45738"/>
</dbReference>
<dbReference type="RefSeq" id="NP_416437.1">
    <property type="nucleotide sequence ID" value="NC_000913.3"/>
</dbReference>
<dbReference type="RefSeq" id="WP_001245695.1">
    <property type="nucleotide sequence ID" value="NZ_LN832404.1"/>
</dbReference>
<dbReference type="SMR" id="P26612"/>
<dbReference type="BioGRID" id="4260380">
    <property type="interactions" value="14"/>
</dbReference>
<dbReference type="DIP" id="DIP-9108N"/>
<dbReference type="FunCoup" id="P26612">
    <property type="interactions" value="306"/>
</dbReference>
<dbReference type="IntAct" id="P26612">
    <property type="interactions" value="4"/>
</dbReference>
<dbReference type="STRING" id="511145.b1927"/>
<dbReference type="CAZy" id="GH13">
    <property type="family name" value="Glycoside Hydrolase Family 13"/>
</dbReference>
<dbReference type="jPOST" id="P26612"/>
<dbReference type="PaxDb" id="511145-b1927"/>
<dbReference type="EnsemblBacteria" id="AAC74994">
    <property type="protein sequence ID" value="AAC74994"/>
    <property type="gene ID" value="b1927"/>
</dbReference>
<dbReference type="GeneID" id="946434"/>
<dbReference type="KEGG" id="ecj:JW1912"/>
<dbReference type="KEGG" id="eco:b1927"/>
<dbReference type="KEGG" id="ecoc:C3026_10930"/>
<dbReference type="PATRIC" id="fig|1411691.4.peg.322"/>
<dbReference type="EchoBASE" id="EB1360"/>
<dbReference type="eggNOG" id="COG0366">
    <property type="taxonomic scope" value="Bacteria"/>
</dbReference>
<dbReference type="HOGENOM" id="CLU_024572_2_0_6"/>
<dbReference type="InParanoid" id="P26612"/>
<dbReference type="OMA" id="CVVIMSN"/>
<dbReference type="OrthoDB" id="9805159at2"/>
<dbReference type="PhylomeDB" id="P26612"/>
<dbReference type="BioCyc" id="EcoCyc:ALPHA-AMYL-CYTO-MONOMER"/>
<dbReference type="BioCyc" id="MetaCyc:ALPHA-AMYL-CYTO-MONOMER"/>
<dbReference type="PRO" id="PR:P26612"/>
<dbReference type="Proteomes" id="UP000000625">
    <property type="component" value="Chromosome"/>
</dbReference>
<dbReference type="GO" id="GO:0005737">
    <property type="term" value="C:cytoplasm"/>
    <property type="evidence" value="ECO:0000314"/>
    <property type="project" value="EcoCyc"/>
</dbReference>
<dbReference type="GO" id="GO:0004556">
    <property type="term" value="F:alpha-amylase activity"/>
    <property type="evidence" value="ECO:0000314"/>
    <property type="project" value="EcoCyc"/>
</dbReference>
<dbReference type="GO" id="GO:0005509">
    <property type="term" value="F:calcium ion binding"/>
    <property type="evidence" value="ECO:0007669"/>
    <property type="project" value="InterPro"/>
</dbReference>
<dbReference type="GO" id="GO:0005975">
    <property type="term" value="P:carbohydrate metabolic process"/>
    <property type="evidence" value="ECO:0007669"/>
    <property type="project" value="InterPro"/>
</dbReference>
<dbReference type="CDD" id="cd11318">
    <property type="entry name" value="AmyAc_bac_fung_AmyA"/>
    <property type="match status" value="1"/>
</dbReference>
<dbReference type="FunFam" id="2.40.30.140:FF:000001">
    <property type="entry name" value="Cytoplasmic alpha-amylase"/>
    <property type="match status" value="1"/>
</dbReference>
<dbReference type="Gene3D" id="2.40.30.140">
    <property type="match status" value="1"/>
</dbReference>
<dbReference type="Gene3D" id="3.20.20.80">
    <property type="entry name" value="Glycosidases"/>
    <property type="match status" value="1"/>
</dbReference>
<dbReference type="Gene3D" id="2.60.40.1180">
    <property type="entry name" value="Golgi alpha-mannosidase II"/>
    <property type="match status" value="1"/>
</dbReference>
<dbReference type="InterPro" id="IPR013776">
    <property type="entry name" value="A-amylase_thermo"/>
</dbReference>
<dbReference type="InterPro" id="IPR006047">
    <property type="entry name" value="Glyco_hydro_13_cat_dom"/>
</dbReference>
<dbReference type="InterPro" id="IPR013780">
    <property type="entry name" value="Glyco_hydro_b"/>
</dbReference>
<dbReference type="InterPro" id="IPR017853">
    <property type="entry name" value="Glycoside_hydrolase_SF"/>
</dbReference>
<dbReference type="NCBIfam" id="NF006968">
    <property type="entry name" value="PRK09441.1-1"/>
    <property type="match status" value="1"/>
</dbReference>
<dbReference type="NCBIfam" id="NF006969">
    <property type="entry name" value="PRK09441.1-2"/>
    <property type="match status" value="1"/>
</dbReference>
<dbReference type="PANTHER" id="PTHR43447">
    <property type="entry name" value="ALPHA-AMYLASE"/>
    <property type="match status" value="1"/>
</dbReference>
<dbReference type="Pfam" id="PF00128">
    <property type="entry name" value="Alpha-amylase"/>
    <property type="match status" value="1"/>
</dbReference>
<dbReference type="PIRSF" id="PIRSF001021">
    <property type="entry name" value="Alph-amls_thrmst"/>
    <property type="match status" value="1"/>
</dbReference>
<dbReference type="SMART" id="SM00642">
    <property type="entry name" value="Aamy"/>
    <property type="match status" value="1"/>
</dbReference>
<dbReference type="SUPFAM" id="SSF51445">
    <property type="entry name" value="(Trans)glycosidases"/>
    <property type="match status" value="1"/>
</dbReference>
<dbReference type="SUPFAM" id="SSF51011">
    <property type="entry name" value="Glycosyl hydrolase domain"/>
    <property type="match status" value="1"/>
</dbReference>
<organism>
    <name type="scientific">Escherichia coli (strain K12)</name>
    <dbReference type="NCBI Taxonomy" id="83333"/>
    <lineage>
        <taxon>Bacteria</taxon>
        <taxon>Pseudomonadati</taxon>
        <taxon>Pseudomonadota</taxon>
        <taxon>Gammaproteobacteria</taxon>
        <taxon>Enterobacterales</taxon>
        <taxon>Enterobacteriaceae</taxon>
        <taxon>Escherichia</taxon>
    </lineage>
</organism>
<feature type="chain" id="PRO_0000054287" description="Cytoplasmic alpha-amylase">
    <location>
        <begin position="1"/>
        <end position="495"/>
    </location>
</feature>
<feature type="active site" description="Nucleophile" evidence="1">
    <location>
        <position position="235"/>
    </location>
</feature>
<feature type="active site" description="Proton donor" evidence="1">
    <location>
        <position position="265"/>
    </location>
</feature>
<feature type="binding site" evidence="2">
    <location>
        <position position="104"/>
    </location>
    <ligand>
        <name>Ca(2+)</name>
        <dbReference type="ChEBI" id="CHEBI:29108"/>
    </ligand>
</feature>
<feature type="binding site" evidence="2">
    <location>
        <position position="198"/>
    </location>
    <ligand>
        <name>Ca(2+)</name>
        <dbReference type="ChEBI" id="CHEBI:29108"/>
    </ligand>
</feature>
<feature type="binding site" evidence="2">
    <location>
        <position position="239"/>
    </location>
    <ligand>
        <name>Ca(2+)</name>
        <dbReference type="ChEBI" id="CHEBI:29108"/>
    </ligand>
</feature>
<feature type="site" description="Transition state stabilizer" evidence="1">
    <location>
        <position position="332"/>
    </location>
</feature>
<feature type="sequence conflict" description="In Ref. 1; AAA23810." evidence="5" ref="1">
    <original>KL</original>
    <variation>SS</variation>
    <location>
        <begin position="19"/>
        <end position="20"/>
    </location>
</feature>
<feature type="sequence conflict" description="In Ref. 1; AAA23810." evidence="5" ref="1">
    <original>A</original>
    <variation>V</variation>
    <location>
        <position position="109"/>
    </location>
</feature>
<feature type="sequence conflict" description="In Ref. 1; AAA23810." evidence="5" ref="1">
    <original>Q</original>
    <variation>E</variation>
    <location>
        <position position="149"/>
    </location>
</feature>
<feature type="sequence conflict" description="In Ref. 1; AAA23810." evidence="5" ref="1">
    <original>L</original>
    <variation>I</variation>
    <location>
        <position position="234"/>
    </location>
</feature>
<gene>
    <name type="primary">amyA</name>
    <name type="synonym">yedC</name>
    <name type="ordered locus">b1927</name>
    <name type="ordered locus">JW1912</name>
</gene>
<reference key="1">
    <citation type="journal article" date="1992" name="J. Bacteriol.">
        <title>Escherichia coli produces a cytoplasmic alpha-amylase, AmyA.</title>
        <authorList>
            <person name="Raha M."/>
            <person name="Kawagishi I."/>
            <person name="Mueller V."/>
            <person name="Kihara M."/>
            <person name="Macnab R.M."/>
        </authorList>
    </citation>
    <scope>NUCLEOTIDE SEQUENCE [GENOMIC DNA]</scope>
    <scope>SUBCELLULAR LOCATION</scope>
    <scope>CATALYTIC ACTIVITY</scope>
    <source>
        <strain>JA11</strain>
    </source>
</reference>
<reference key="2">
    <citation type="journal article" date="1996" name="DNA Res.">
        <title>A 460-kb DNA sequence of the Escherichia coli K-12 genome corresponding to the 40.1-50.0 min region on the linkage map.</title>
        <authorList>
            <person name="Itoh T."/>
            <person name="Aiba H."/>
            <person name="Baba T."/>
            <person name="Fujita K."/>
            <person name="Hayashi K."/>
            <person name="Inada T."/>
            <person name="Isono K."/>
            <person name="Kasai H."/>
            <person name="Kimura S."/>
            <person name="Kitakawa M."/>
            <person name="Kitagawa M."/>
            <person name="Makino K."/>
            <person name="Miki T."/>
            <person name="Mizobuchi K."/>
            <person name="Mori H."/>
            <person name="Mori T."/>
            <person name="Motomura K."/>
            <person name="Nakade S."/>
            <person name="Nakamura Y."/>
            <person name="Nashimoto H."/>
            <person name="Nishio Y."/>
            <person name="Oshima T."/>
            <person name="Saito N."/>
            <person name="Sampei G."/>
            <person name="Seki Y."/>
            <person name="Sivasundaram S."/>
            <person name="Tagami H."/>
            <person name="Takeda J."/>
            <person name="Takemoto K."/>
            <person name="Wada C."/>
            <person name="Yamamoto Y."/>
            <person name="Horiuchi T."/>
        </authorList>
    </citation>
    <scope>NUCLEOTIDE SEQUENCE [LARGE SCALE GENOMIC DNA]</scope>
    <source>
        <strain>K12 / W3110 / ATCC 27325 / DSM 5911</strain>
    </source>
</reference>
<reference key="3">
    <citation type="journal article" date="1997" name="Science">
        <title>The complete genome sequence of Escherichia coli K-12.</title>
        <authorList>
            <person name="Blattner F.R."/>
            <person name="Plunkett G. III"/>
            <person name="Bloch C.A."/>
            <person name="Perna N.T."/>
            <person name="Burland V."/>
            <person name="Riley M."/>
            <person name="Collado-Vides J."/>
            <person name="Glasner J.D."/>
            <person name="Rode C.K."/>
            <person name="Mayhew G.F."/>
            <person name="Gregor J."/>
            <person name="Davis N.W."/>
            <person name="Kirkpatrick H.A."/>
            <person name="Goeden M.A."/>
            <person name="Rose D.J."/>
            <person name="Mau B."/>
            <person name="Shao Y."/>
        </authorList>
    </citation>
    <scope>NUCLEOTIDE SEQUENCE [LARGE SCALE GENOMIC DNA]</scope>
    <source>
        <strain>K12 / MG1655 / ATCC 47076</strain>
    </source>
</reference>
<reference key="4">
    <citation type="journal article" date="2006" name="Mol. Syst. Biol.">
        <title>Highly accurate genome sequences of Escherichia coli K-12 strains MG1655 and W3110.</title>
        <authorList>
            <person name="Hayashi K."/>
            <person name="Morooka N."/>
            <person name="Yamamoto Y."/>
            <person name="Fujita K."/>
            <person name="Isono K."/>
            <person name="Choi S."/>
            <person name="Ohtsubo E."/>
            <person name="Baba T."/>
            <person name="Wanner B.L."/>
            <person name="Mori H."/>
            <person name="Horiuchi T."/>
        </authorList>
    </citation>
    <scope>NUCLEOTIDE SEQUENCE [LARGE SCALE GENOMIC DNA]</scope>
    <source>
        <strain>K12 / W3110 / ATCC 27325 / DSM 5911</strain>
    </source>
</reference>
<reference key="5">
    <citation type="journal article" date="1992" name="J. Gen. Microbiol.">
        <title>Subdivision of flagellar region III of the Escherichia coli and Salmonella typhimurium chromosomes and identification of two additional flagellar genes.</title>
        <authorList>
            <person name="Kawagishi I."/>
            <person name="Mueller V."/>
            <person name="Williams A.W."/>
            <person name="Irikura V.M."/>
            <person name="Macnab R.M."/>
        </authorList>
    </citation>
    <scope>NUCLEOTIDE SEQUENCE [GENOMIC DNA] OF 1-5</scope>
    <source>
        <strain>JA11</strain>
    </source>
</reference>
<reference key="6">
    <citation type="journal article" date="1993" name="J. Gen. Microbiol.">
        <title>Organization of the Escherichia coli and Salmonella typhimurium chromosomes between flagellar regions IIIa and IIIb, including a large non-coding region.</title>
        <authorList>
            <person name="Raha M."/>
            <person name="Kihara M."/>
            <person name="Kawagishi I."/>
            <person name="Macnab R.M."/>
        </authorList>
    </citation>
    <scope>NUCLEOTIDE SEQUENCE [GENOMIC DNA] OF 475-495</scope>
    <source>
        <strain>JA11</strain>
    </source>
</reference>
<protein>
    <recommendedName>
        <fullName>Cytoplasmic alpha-amylase</fullName>
        <ecNumber evidence="4">3.2.1.1</ecNumber>
    </recommendedName>
    <alternativeName>
        <fullName>1,4-alpha-D-glucan glucanohydrolase</fullName>
    </alternativeName>
</protein>
<comment type="catalytic activity">
    <reaction evidence="4">
        <text>Endohydrolysis of (1-&gt;4)-alpha-D-glucosidic linkages in polysaccharides containing three or more (1-&gt;4)-alpha-linked D-glucose units.</text>
        <dbReference type="EC" id="3.2.1.1"/>
    </reaction>
</comment>
<comment type="cofactor">
    <cofactor evidence="3">
        <name>Ca(2+)</name>
        <dbReference type="ChEBI" id="CHEBI:29108"/>
    </cofactor>
    <text evidence="3">Binds 1 Ca(2+) ion per subunit.</text>
</comment>
<comment type="subunit">
    <text evidence="1">Monomer.</text>
</comment>
<comment type="subcellular location">
    <subcellularLocation>
        <location evidence="4">Cytoplasm</location>
    </subcellularLocation>
</comment>
<comment type="similarity">
    <text evidence="5">Belongs to the glycosyl hydrolase 13 family.</text>
</comment>
<evidence type="ECO:0000250" key="1"/>
<evidence type="ECO:0000250" key="2">
    <source>
        <dbReference type="UniProtKB" id="P00692"/>
    </source>
</evidence>
<evidence type="ECO:0000250" key="3">
    <source>
        <dbReference type="UniProtKB" id="P06278"/>
    </source>
</evidence>
<evidence type="ECO:0000269" key="4">
    <source>
    </source>
</evidence>
<evidence type="ECO:0000305" key="5"/>